<dbReference type="EMBL" id="AF022214">
    <property type="protein sequence ID" value="AAC18486.1"/>
    <property type="molecule type" value="Genomic_DNA"/>
</dbReference>
<dbReference type="PIR" id="C72805">
    <property type="entry name" value="C72805"/>
</dbReference>
<dbReference type="RefSeq" id="NP_046861.1">
    <property type="nucleotide sequence ID" value="NC_001900.1"/>
</dbReference>
<dbReference type="GeneID" id="1261585"/>
<dbReference type="KEGG" id="vg:1261585"/>
<dbReference type="OrthoDB" id="16520at10239"/>
<dbReference type="Proteomes" id="UP000002131">
    <property type="component" value="Segment"/>
</dbReference>
<dbReference type="InterPro" id="IPR035252">
    <property type="entry name" value="Gp44"/>
</dbReference>
<dbReference type="Pfam" id="PF17510">
    <property type="entry name" value="GP44"/>
    <property type="match status" value="1"/>
</dbReference>
<name>VG441_BPMD2</name>
<sequence>MADRIQVVIALPRDEALPIDVQAVGLRRMAIDLMKEVADVEENTVRYTGGTDNATINFGGEIGLLTTWQHNLLAARFVADGTAKKEVVGPIVHRDTVTRVHSSASVERNPY</sequence>
<feature type="chain" id="PRO_0000164838" description="Gene 44.1 protein">
    <location>
        <begin position="1"/>
        <end position="111"/>
    </location>
</feature>
<organismHost>
    <name type="scientific">Mycobacterium</name>
    <dbReference type="NCBI Taxonomy" id="1763"/>
</organismHost>
<reference key="1">
    <citation type="journal article" date="1998" name="J. Mol. Biol.">
        <title>Genome structure of mycobacteriophage D29: implications for phage evolution.</title>
        <authorList>
            <person name="Ford M.E."/>
            <person name="Sarkis G.J."/>
            <person name="Belanger A.E."/>
            <person name="Hendrix R.W."/>
            <person name="Hatfull G.F."/>
        </authorList>
    </citation>
    <scope>NUCLEOTIDE SEQUENCE [LARGE SCALE GENOMIC DNA]</scope>
</reference>
<proteinExistence type="predicted"/>
<organism>
    <name type="scientific">Mycobacterium phage D29</name>
    <name type="common">Mycobacteriophage D29</name>
    <dbReference type="NCBI Taxonomy" id="28369"/>
    <lineage>
        <taxon>Viruses</taxon>
        <taxon>Duplodnaviria</taxon>
        <taxon>Heunggongvirae</taxon>
        <taxon>Uroviricota</taxon>
        <taxon>Caudoviricetes</taxon>
        <taxon>Fromanvirus</taxon>
    </lineage>
</organism>
<keyword id="KW-1185">Reference proteome</keyword>
<protein>
    <recommendedName>
        <fullName>Gene 44.1 protein</fullName>
    </recommendedName>
    <alternativeName>
        <fullName>Gp44.1</fullName>
    </alternativeName>
</protein>
<accession>O64236</accession>
<gene>
    <name type="primary">44.1</name>
</gene>